<accession>Q1GYZ3</accession>
<protein>
    <recommendedName>
        <fullName evidence="1">Ribosomal RNA small subunit methyltransferase H</fullName>
        <ecNumber evidence="1">2.1.1.199</ecNumber>
    </recommendedName>
    <alternativeName>
        <fullName evidence="1">16S rRNA m(4)C1402 methyltransferase</fullName>
    </alternativeName>
    <alternativeName>
        <fullName evidence="1">rRNA (cytosine-N(4)-)-methyltransferase RsmH</fullName>
    </alternativeName>
</protein>
<gene>
    <name evidence="1" type="primary">rsmH</name>
    <name type="synonym">mraW</name>
    <name type="ordered locus">Mfla_2277</name>
</gene>
<sequence>MSAGISHVPAAQVSQHVTVLLEEAVEALSIKPDGVYVDGTFGRGGHSRKILEKLGAQGRLVALDRDLAAIQAAQGIQDARFKIVHSHFAAMAQVLASLNIQQVDGVLLDLGISSPQIDEGERGFSFRFDGPLDMRMDQSRGQTAAEFIATATEQELTRVIKEYGEERFAKQIARAIVAQRAGGMDISTTGQLAKIVAGAVPKVEPGQDPATRTFQALRIFINQELEELSLTLPQCLSLLAPQGRLAVISFHSLEDRIVKRFIRGEQDRDNLPAHFPVRASDLPQPRLVAIGRAVRPSEDEVRRNPRSRSAVLRVAERTAVL</sequence>
<proteinExistence type="inferred from homology"/>
<feature type="chain" id="PRO_0000386972" description="Ribosomal RNA small subunit methyltransferase H">
    <location>
        <begin position="1"/>
        <end position="321"/>
    </location>
</feature>
<feature type="binding site" evidence="1">
    <location>
        <begin position="44"/>
        <end position="46"/>
    </location>
    <ligand>
        <name>S-adenosyl-L-methionine</name>
        <dbReference type="ChEBI" id="CHEBI:59789"/>
    </ligand>
</feature>
<feature type="binding site" evidence="1">
    <location>
        <position position="64"/>
    </location>
    <ligand>
        <name>S-adenosyl-L-methionine</name>
        <dbReference type="ChEBI" id="CHEBI:59789"/>
    </ligand>
</feature>
<feature type="binding site" evidence="1">
    <location>
        <position position="88"/>
    </location>
    <ligand>
        <name>S-adenosyl-L-methionine</name>
        <dbReference type="ChEBI" id="CHEBI:59789"/>
    </ligand>
</feature>
<feature type="binding site" evidence="1">
    <location>
        <position position="109"/>
    </location>
    <ligand>
        <name>S-adenosyl-L-methionine</name>
        <dbReference type="ChEBI" id="CHEBI:59789"/>
    </ligand>
</feature>
<feature type="binding site" evidence="1">
    <location>
        <position position="116"/>
    </location>
    <ligand>
        <name>S-adenosyl-L-methionine</name>
        <dbReference type="ChEBI" id="CHEBI:59789"/>
    </ligand>
</feature>
<dbReference type="EC" id="2.1.1.199" evidence="1"/>
<dbReference type="EMBL" id="CP000284">
    <property type="protein sequence ID" value="ABE50544.1"/>
    <property type="molecule type" value="Genomic_DNA"/>
</dbReference>
<dbReference type="RefSeq" id="WP_011480498.1">
    <property type="nucleotide sequence ID" value="NC_007947.1"/>
</dbReference>
<dbReference type="SMR" id="Q1GYZ3"/>
<dbReference type="STRING" id="265072.Mfla_2277"/>
<dbReference type="KEGG" id="mfa:Mfla_2277"/>
<dbReference type="eggNOG" id="COG0275">
    <property type="taxonomic scope" value="Bacteria"/>
</dbReference>
<dbReference type="HOGENOM" id="CLU_038422_2_0_4"/>
<dbReference type="OrthoDB" id="9806637at2"/>
<dbReference type="Proteomes" id="UP000002440">
    <property type="component" value="Chromosome"/>
</dbReference>
<dbReference type="GO" id="GO:0005737">
    <property type="term" value="C:cytoplasm"/>
    <property type="evidence" value="ECO:0007669"/>
    <property type="project" value="UniProtKB-SubCell"/>
</dbReference>
<dbReference type="GO" id="GO:0071424">
    <property type="term" value="F:rRNA (cytosine-N4-)-methyltransferase activity"/>
    <property type="evidence" value="ECO:0007669"/>
    <property type="project" value="UniProtKB-UniRule"/>
</dbReference>
<dbReference type="GO" id="GO:0070475">
    <property type="term" value="P:rRNA base methylation"/>
    <property type="evidence" value="ECO:0007669"/>
    <property type="project" value="UniProtKB-UniRule"/>
</dbReference>
<dbReference type="FunFam" id="1.10.150.170:FF:000003">
    <property type="entry name" value="Ribosomal RNA small subunit methyltransferase H"/>
    <property type="match status" value="1"/>
</dbReference>
<dbReference type="Gene3D" id="1.10.150.170">
    <property type="entry name" value="Putative methyltransferase TM0872, insert domain"/>
    <property type="match status" value="1"/>
</dbReference>
<dbReference type="Gene3D" id="3.40.50.150">
    <property type="entry name" value="Vaccinia Virus protein VP39"/>
    <property type="match status" value="1"/>
</dbReference>
<dbReference type="HAMAP" id="MF_01007">
    <property type="entry name" value="16SrRNA_methyltr_H"/>
    <property type="match status" value="1"/>
</dbReference>
<dbReference type="InterPro" id="IPR002903">
    <property type="entry name" value="RsmH"/>
</dbReference>
<dbReference type="InterPro" id="IPR023397">
    <property type="entry name" value="SAM-dep_MeTrfase_MraW_recog"/>
</dbReference>
<dbReference type="InterPro" id="IPR029063">
    <property type="entry name" value="SAM-dependent_MTases_sf"/>
</dbReference>
<dbReference type="NCBIfam" id="TIGR00006">
    <property type="entry name" value="16S rRNA (cytosine(1402)-N(4))-methyltransferase RsmH"/>
    <property type="match status" value="1"/>
</dbReference>
<dbReference type="PANTHER" id="PTHR11265:SF0">
    <property type="entry name" value="12S RRNA N4-METHYLCYTIDINE METHYLTRANSFERASE"/>
    <property type="match status" value="1"/>
</dbReference>
<dbReference type="PANTHER" id="PTHR11265">
    <property type="entry name" value="S-ADENOSYL-METHYLTRANSFERASE MRAW"/>
    <property type="match status" value="1"/>
</dbReference>
<dbReference type="Pfam" id="PF01795">
    <property type="entry name" value="Methyltransf_5"/>
    <property type="match status" value="1"/>
</dbReference>
<dbReference type="PIRSF" id="PIRSF004486">
    <property type="entry name" value="MraW"/>
    <property type="match status" value="1"/>
</dbReference>
<dbReference type="SUPFAM" id="SSF81799">
    <property type="entry name" value="Putative methyltransferase TM0872, insert domain"/>
    <property type="match status" value="1"/>
</dbReference>
<dbReference type="SUPFAM" id="SSF53335">
    <property type="entry name" value="S-adenosyl-L-methionine-dependent methyltransferases"/>
    <property type="match status" value="1"/>
</dbReference>
<comment type="function">
    <text evidence="1">Specifically methylates the N4 position of cytidine in position 1402 (C1402) of 16S rRNA.</text>
</comment>
<comment type="catalytic activity">
    <reaction evidence="1">
        <text>cytidine(1402) in 16S rRNA + S-adenosyl-L-methionine = N(4)-methylcytidine(1402) in 16S rRNA + S-adenosyl-L-homocysteine + H(+)</text>
        <dbReference type="Rhea" id="RHEA:42928"/>
        <dbReference type="Rhea" id="RHEA-COMP:10286"/>
        <dbReference type="Rhea" id="RHEA-COMP:10287"/>
        <dbReference type="ChEBI" id="CHEBI:15378"/>
        <dbReference type="ChEBI" id="CHEBI:57856"/>
        <dbReference type="ChEBI" id="CHEBI:59789"/>
        <dbReference type="ChEBI" id="CHEBI:74506"/>
        <dbReference type="ChEBI" id="CHEBI:82748"/>
        <dbReference type="EC" id="2.1.1.199"/>
    </reaction>
</comment>
<comment type="subcellular location">
    <subcellularLocation>
        <location evidence="1">Cytoplasm</location>
    </subcellularLocation>
</comment>
<comment type="similarity">
    <text evidence="1">Belongs to the methyltransferase superfamily. RsmH family.</text>
</comment>
<reference key="1">
    <citation type="submission" date="2006-03" db="EMBL/GenBank/DDBJ databases">
        <title>Complete sequence of Methylobacillus flagellatus KT.</title>
        <authorList>
            <consortium name="US DOE Joint Genome Institute"/>
            <person name="Copeland A."/>
            <person name="Lucas S."/>
            <person name="Lapidus A."/>
            <person name="Barry K."/>
            <person name="Detter J.C."/>
            <person name="Glavina del Rio T."/>
            <person name="Hammon N."/>
            <person name="Israni S."/>
            <person name="Dalin E."/>
            <person name="Tice H."/>
            <person name="Pitluck S."/>
            <person name="Brettin T."/>
            <person name="Bruce D."/>
            <person name="Han C."/>
            <person name="Tapia R."/>
            <person name="Saunders E."/>
            <person name="Gilna P."/>
            <person name="Schmutz J."/>
            <person name="Larimer F."/>
            <person name="Land M."/>
            <person name="Kyrpides N."/>
            <person name="Anderson I."/>
            <person name="Richardson P."/>
        </authorList>
    </citation>
    <scope>NUCLEOTIDE SEQUENCE [LARGE SCALE GENOMIC DNA]</scope>
    <source>
        <strain>ATCC 51484 / DSM 6875 / VKM B-1610 / KT</strain>
    </source>
</reference>
<name>RSMH_METFK</name>
<organism>
    <name type="scientific">Methylobacillus flagellatus (strain ATCC 51484 / DSM 6875 / VKM B-1610 / KT)</name>
    <dbReference type="NCBI Taxonomy" id="265072"/>
    <lineage>
        <taxon>Bacteria</taxon>
        <taxon>Pseudomonadati</taxon>
        <taxon>Pseudomonadota</taxon>
        <taxon>Betaproteobacteria</taxon>
        <taxon>Nitrosomonadales</taxon>
        <taxon>Methylophilaceae</taxon>
        <taxon>Methylobacillus</taxon>
    </lineage>
</organism>
<keyword id="KW-0963">Cytoplasm</keyword>
<keyword id="KW-0489">Methyltransferase</keyword>
<keyword id="KW-1185">Reference proteome</keyword>
<keyword id="KW-0698">rRNA processing</keyword>
<keyword id="KW-0949">S-adenosyl-L-methionine</keyword>
<keyword id="KW-0808">Transferase</keyword>
<evidence type="ECO:0000255" key="1">
    <source>
        <dbReference type="HAMAP-Rule" id="MF_01007"/>
    </source>
</evidence>